<comment type="function">
    <text evidence="1">E3 ubiquitin-protein ligase that plays a role in the regulation of inflammatory response. Mechanistically, mediates the 'Lys-48'-linked polyubiquitination of TAB2, a regulatory protein of the kinase TAK1, leading to its degradation via the proteasomal pathway and inhibition of the TLR-mediated inflammatory immune response. May act as a transcriptional repressor in mitogen-activated protein kinase signaling pathway.</text>
</comment>
<comment type="catalytic activity">
    <reaction evidence="1">
        <text>S-ubiquitinyl-[E2 ubiquitin-conjugating enzyme]-L-cysteine + [acceptor protein]-L-lysine = [E2 ubiquitin-conjugating enzyme]-L-cysteine + N(6)-ubiquitinyl-[acceptor protein]-L-lysine.</text>
        <dbReference type="EC" id="2.3.2.27"/>
    </reaction>
</comment>
<comment type="subcellular location">
    <subcellularLocation>
        <location evidence="1">Cytoplasm</location>
    </subcellularLocation>
    <subcellularLocation>
        <location evidence="1">Nucleus</location>
    </subcellularLocation>
</comment>
<comment type="similarity">
    <text evidence="5">Belongs to the TRIM/RBCC family.</text>
</comment>
<evidence type="ECO:0000250" key="1">
    <source>
        <dbReference type="UniProtKB" id="Q9H8W5"/>
    </source>
</evidence>
<evidence type="ECO:0000255" key="2"/>
<evidence type="ECO:0000255" key="3">
    <source>
        <dbReference type="PROSITE-ProRule" id="PRU00024"/>
    </source>
</evidence>
<evidence type="ECO:0000255" key="4">
    <source>
        <dbReference type="PROSITE-ProRule" id="PRU00175"/>
    </source>
</evidence>
<evidence type="ECO:0000305" key="5"/>
<gene>
    <name type="primary">TRIM45</name>
</gene>
<organism>
    <name type="scientific">Bos taurus</name>
    <name type="common">Bovine</name>
    <dbReference type="NCBI Taxonomy" id="9913"/>
    <lineage>
        <taxon>Eukaryota</taxon>
        <taxon>Metazoa</taxon>
        <taxon>Chordata</taxon>
        <taxon>Craniata</taxon>
        <taxon>Vertebrata</taxon>
        <taxon>Euteleostomi</taxon>
        <taxon>Mammalia</taxon>
        <taxon>Eutheria</taxon>
        <taxon>Laurasiatheria</taxon>
        <taxon>Artiodactyla</taxon>
        <taxon>Ruminantia</taxon>
        <taxon>Pecora</taxon>
        <taxon>Bovidae</taxon>
        <taxon>Bovinae</taxon>
        <taxon>Bos</taxon>
    </lineage>
</organism>
<protein>
    <recommendedName>
        <fullName>E3 ubiquitin-protein ligase TRIM45</fullName>
        <ecNumber evidence="1">2.3.2.27</ecNumber>
    </recommendedName>
    <alternativeName>
        <fullName>RING finger protein 99</fullName>
    </alternativeName>
    <alternativeName>
        <fullName>Tripartite motif-containing protein 45</fullName>
    </alternativeName>
</protein>
<feature type="chain" id="PRO_0000245027" description="E3 ubiquitin-protein ligase TRIM45">
    <location>
        <begin position="1"/>
        <end position="580"/>
    </location>
</feature>
<feature type="repeat" description="Filamin">
    <location>
        <begin position="394"/>
        <end position="497"/>
    </location>
</feature>
<feature type="zinc finger region" description="RING-type" evidence="4">
    <location>
        <begin position="29"/>
        <end position="98"/>
    </location>
</feature>
<feature type="zinc finger region" description="B box-type 1" evidence="3">
    <location>
        <begin position="130"/>
        <end position="176"/>
    </location>
</feature>
<feature type="zinc finger region" description="B box-type 2" evidence="3">
    <location>
        <begin position="186"/>
        <end position="227"/>
    </location>
</feature>
<feature type="coiled-coil region" evidence="2">
    <location>
        <begin position="281"/>
        <end position="335"/>
    </location>
</feature>
<feature type="binding site" evidence="3">
    <location>
        <position position="135"/>
    </location>
    <ligand>
        <name>Zn(2+)</name>
        <dbReference type="ChEBI" id="CHEBI:29105"/>
        <label>1</label>
    </ligand>
</feature>
<feature type="binding site" evidence="3">
    <location>
        <position position="138"/>
    </location>
    <ligand>
        <name>Zn(2+)</name>
        <dbReference type="ChEBI" id="CHEBI:29105"/>
        <label>1</label>
    </ligand>
</feature>
<feature type="binding site" evidence="3">
    <location>
        <position position="158"/>
    </location>
    <ligand>
        <name>Zn(2+)</name>
        <dbReference type="ChEBI" id="CHEBI:29105"/>
        <label>1</label>
    </ligand>
</feature>
<feature type="binding site" evidence="3">
    <location>
        <position position="162"/>
    </location>
    <ligand>
        <name>Zn(2+)</name>
        <dbReference type="ChEBI" id="CHEBI:29105"/>
        <label>1</label>
    </ligand>
</feature>
<feature type="binding site" evidence="3">
    <location>
        <position position="191"/>
    </location>
    <ligand>
        <name>Zn(2+)</name>
        <dbReference type="ChEBI" id="CHEBI:29105"/>
        <label>2</label>
    </ligand>
</feature>
<feature type="binding site" evidence="3">
    <location>
        <position position="194"/>
    </location>
    <ligand>
        <name>Zn(2+)</name>
        <dbReference type="ChEBI" id="CHEBI:29105"/>
        <label>2</label>
    </ligand>
</feature>
<feature type="binding site" evidence="3">
    <location>
        <position position="214"/>
    </location>
    <ligand>
        <name>Zn(2+)</name>
        <dbReference type="ChEBI" id="CHEBI:29105"/>
        <label>2</label>
    </ligand>
</feature>
<feature type="binding site" evidence="3">
    <location>
        <position position="219"/>
    </location>
    <ligand>
        <name>Zn(2+)</name>
        <dbReference type="ChEBI" id="CHEBI:29105"/>
        <label>2</label>
    </ligand>
</feature>
<dbReference type="EC" id="2.3.2.27" evidence="1"/>
<dbReference type="EMBL" id="BT021203">
    <property type="protein sequence ID" value="AAX31385.1"/>
    <property type="molecule type" value="mRNA"/>
</dbReference>
<dbReference type="RefSeq" id="NP_001014952.1">
    <property type="nucleotide sequence ID" value="NM_001014952.1"/>
</dbReference>
<dbReference type="RefSeq" id="XP_010801425.1">
    <property type="nucleotide sequence ID" value="XM_010803123.2"/>
</dbReference>
<dbReference type="RefSeq" id="XP_059740767.1">
    <property type="nucleotide sequence ID" value="XM_059884784.1"/>
</dbReference>
<dbReference type="SMR" id="Q5BIM1"/>
<dbReference type="FunCoup" id="Q5BIM1">
    <property type="interactions" value="815"/>
</dbReference>
<dbReference type="STRING" id="9913.ENSBTAP00000002293"/>
<dbReference type="PaxDb" id="9913-ENSBTAP00000002293"/>
<dbReference type="Ensembl" id="ENSBTAT00000002293.4">
    <property type="protein sequence ID" value="ENSBTAP00000002293.3"/>
    <property type="gene ID" value="ENSBTAG00000001748.5"/>
</dbReference>
<dbReference type="GeneID" id="539091"/>
<dbReference type="KEGG" id="bta:539091"/>
<dbReference type="CTD" id="80263"/>
<dbReference type="VEuPathDB" id="HostDB:ENSBTAG00000001748"/>
<dbReference type="VGNC" id="VGNC:36337">
    <property type="gene designation" value="TRIM45"/>
</dbReference>
<dbReference type="eggNOG" id="KOG2177">
    <property type="taxonomic scope" value="Eukaryota"/>
</dbReference>
<dbReference type="GeneTree" id="ENSGT00940000154334"/>
<dbReference type="HOGENOM" id="CLU_013137_14_8_1"/>
<dbReference type="InParanoid" id="Q5BIM1"/>
<dbReference type="OMA" id="TRCPLCM"/>
<dbReference type="OrthoDB" id="264520at2759"/>
<dbReference type="TreeFam" id="TF324196"/>
<dbReference type="Proteomes" id="UP000009136">
    <property type="component" value="Chromosome 3"/>
</dbReference>
<dbReference type="Bgee" id="ENSBTAG00000001748">
    <property type="expression patterns" value="Expressed in corpus luteum and 107 other cell types or tissues"/>
</dbReference>
<dbReference type="GO" id="GO:0005737">
    <property type="term" value="C:cytoplasm"/>
    <property type="evidence" value="ECO:0007669"/>
    <property type="project" value="UniProtKB-SubCell"/>
</dbReference>
<dbReference type="GO" id="GO:0005654">
    <property type="term" value="C:nucleoplasm"/>
    <property type="evidence" value="ECO:0000318"/>
    <property type="project" value="GO_Central"/>
</dbReference>
<dbReference type="GO" id="GO:0061630">
    <property type="term" value="F:ubiquitin protein ligase activity"/>
    <property type="evidence" value="ECO:0000318"/>
    <property type="project" value="GO_Central"/>
</dbReference>
<dbReference type="GO" id="GO:0008270">
    <property type="term" value="F:zinc ion binding"/>
    <property type="evidence" value="ECO:0007669"/>
    <property type="project" value="UniProtKB-KW"/>
</dbReference>
<dbReference type="CDD" id="cd19809">
    <property type="entry name" value="Bbox1_TRIM45_C-X"/>
    <property type="match status" value="1"/>
</dbReference>
<dbReference type="CDD" id="cd19785">
    <property type="entry name" value="Bbox2_TRIM45_C-X"/>
    <property type="match status" value="1"/>
</dbReference>
<dbReference type="CDD" id="cd16588">
    <property type="entry name" value="RING-HC_TRIM45_C-VII"/>
    <property type="match status" value="1"/>
</dbReference>
<dbReference type="Gene3D" id="3.30.160.60">
    <property type="entry name" value="Classic Zinc Finger"/>
    <property type="match status" value="1"/>
</dbReference>
<dbReference type="Gene3D" id="2.60.40.10">
    <property type="entry name" value="Immunoglobulins"/>
    <property type="match status" value="1"/>
</dbReference>
<dbReference type="Gene3D" id="3.30.40.10">
    <property type="entry name" value="Zinc/RING finger domain, C3HC4 (zinc finger)"/>
    <property type="match status" value="1"/>
</dbReference>
<dbReference type="InterPro" id="IPR003649">
    <property type="entry name" value="Bbox_C"/>
</dbReference>
<dbReference type="InterPro" id="IPR017868">
    <property type="entry name" value="Filamin/ABP280_repeat-like"/>
</dbReference>
<dbReference type="InterPro" id="IPR001298">
    <property type="entry name" value="Filamin/ABP280_rpt"/>
</dbReference>
<dbReference type="InterPro" id="IPR013783">
    <property type="entry name" value="Ig-like_fold"/>
</dbReference>
<dbReference type="InterPro" id="IPR014756">
    <property type="entry name" value="Ig_E-set"/>
</dbReference>
<dbReference type="InterPro" id="IPR047153">
    <property type="entry name" value="TRIM45/56/19-like"/>
</dbReference>
<dbReference type="InterPro" id="IPR027370">
    <property type="entry name" value="Znf-RING_euk"/>
</dbReference>
<dbReference type="InterPro" id="IPR000315">
    <property type="entry name" value="Znf_B-box"/>
</dbReference>
<dbReference type="InterPro" id="IPR001841">
    <property type="entry name" value="Znf_RING"/>
</dbReference>
<dbReference type="InterPro" id="IPR013083">
    <property type="entry name" value="Znf_RING/FYVE/PHD"/>
</dbReference>
<dbReference type="InterPro" id="IPR017907">
    <property type="entry name" value="Znf_RING_CS"/>
</dbReference>
<dbReference type="PANTHER" id="PTHR25462">
    <property type="entry name" value="BONUS, ISOFORM C-RELATED"/>
    <property type="match status" value="1"/>
</dbReference>
<dbReference type="PANTHER" id="PTHR25462:SF291">
    <property type="entry name" value="E3 UBIQUITIN-PROTEIN LIGASE TRIM45"/>
    <property type="match status" value="1"/>
</dbReference>
<dbReference type="Pfam" id="PF00630">
    <property type="entry name" value="Filamin"/>
    <property type="match status" value="1"/>
</dbReference>
<dbReference type="Pfam" id="PF00643">
    <property type="entry name" value="zf-B_box"/>
    <property type="match status" value="1"/>
</dbReference>
<dbReference type="Pfam" id="PF13445">
    <property type="entry name" value="zf-RING_UBOX"/>
    <property type="match status" value="1"/>
</dbReference>
<dbReference type="SMART" id="SM00502">
    <property type="entry name" value="BBC"/>
    <property type="match status" value="1"/>
</dbReference>
<dbReference type="SMART" id="SM00336">
    <property type="entry name" value="BBOX"/>
    <property type="match status" value="2"/>
</dbReference>
<dbReference type="SMART" id="SM00557">
    <property type="entry name" value="IG_FLMN"/>
    <property type="match status" value="1"/>
</dbReference>
<dbReference type="SMART" id="SM00184">
    <property type="entry name" value="RING"/>
    <property type="match status" value="1"/>
</dbReference>
<dbReference type="SUPFAM" id="SSF57845">
    <property type="entry name" value="B-box zinc-binding domain"/>
    <property type="match status" value="1"/>
</dbReference>
<dbReference type="SUPFAM" id="SSF81296">
    <property type="entry name" value="E set domains"/>
    <property type="match status" value="1"/>
</dbReference>
<dbReference type="SUPFAM" id="SSF57850">
    <property type="entry name" value="RING/U-box"/>
    <property type="match status" value="1"/>
</dbReference>
<dbReference type="PROSITE" id="PS50194">
    <property type="entry name" value="FILAMIN_REPEAT"/>
    <property type="match status" value="1"/>
</dbReference>
<dbReference type="PROSITE" id="PS50119">
    <property type="entry name" value="ZF_BBOX"/>
    <property type="match status" value="2"/>
</dbReference>
<dbReference type="PROSITE" id="PS00518">
    <property type="entry name" value="ZF_RING_1"/>
    <property type="match status" value="1"/>
</dbReference>
<dbReference type="PROSITE" id="PS50089">
    <property type="entry name" value="ZF_RING_2"/>
    <property type="match status" value="1"/>
</dbReference>
<name>TRI45_BOVIN</name>
<reference key="1">
    <citation type="journal article" date="2005" name="BMC Genomics">
        <title>Characterization of 954 bovine full-CDS cDNA sequences.</title>
        <authorList>
            <person name="Harhay G.P."/>
            <person name="Sonstegard T.S."/>
            <person name="Keele J.W."/>
            <person name="Heaton M.P."/>
            <person name="Clawson M.L."/>
            <person name="Snelling W.M."/>
            <person name="Wiedmann R.T."/>
            <person name="Van Tassell C.P."/>
            <person name="Smith T.P.L."/>
        </authorList>
    </citation>
    <scope>NUCLEOTIDE SEQUENCE [LARGE SCALE MRNA]</scope>
</reference>
<accession>Q5BIM1</accession>
<proteinExistence type="evidence at transcript level"/>
<sequence>MAEKRRPLLGFVGKLPSGTTAGNSGKTHCPLCMGLFKAPRLLPCLHTVCTTCLEQLEPFSVVDIRGGESDTSSEGSVFQELKPRALQPQIGILCPVCDAQVDLPMGGVKALTIDHLAMNDVMLESLRGEGQGLVCDLCSDREVEKRCQTCKANLCRFCCQAHRRQKKTTYHTMVDLKDLKGYSQIGKPILCPAHPAEELRLFCELCDRPVCRDCVVGEHREHPCDFTSNVIHKHGDSVRELLRGTQPHVEALEEALAQIKGTNSAVQERVKAVAADIRTFSEGYIKAIEEHRDKLLKQLEDIRVQKENSLQLQKAQLEQLLADMRTGVEFTEHLLTSGSDLEILITKGVVVERLTKLNKVEYSAHPGVNEKISFSPKQKAGLCRGYEVYGAINTKEVDPAKCVLQGEDLHRAREKQPASFIVLCKDATGESMGRGGDNVQVTVIPNDKKDSPVKTMVHDNKDGTYYVSYTPKEPGTYTVLVCVKEQHVQGSPFTVTVRKRHRSHPGVFHCCTFCSSGGQKTARCACGGTMPGGYLGCGHGHKGHPGRPHWSCCGKFAEKSECTWAGGQSAPRSLLRTVAL</sequence>
<keyword id="KW-0175">Coiled coil</keyword>
<keyword id="KW-0963">Cytoplasm</keyword>
<keyword id="KW-0479">Metal-binding</keyword>
<keyword id="KW-0539">Nucleus</keyword>
<keyword id="KW-1185">Reference proteome</keyword>
<keyword id="KW-0677">Repeat</keyword>
<keyword id="KW-0808">Transferase</keyword>
<keyword id="KW-0833">Ubl conjugation pathway</keyword>
<keyword id="KW-0862">Zinc</keyword>
<keyword id="KW-0863">Zinc-finger</keyword>